<organism>
    <name type="scientific">Escherichia coli (strain K12)</name>
    <dbReference type="NCBI Taxonomy" id="83333"/>
    <lineage>
        <taxon>Bacteria</taxon>
        <taxon>Pseudomonadati</taxon>
        <taxon>Pseudomonadota</taxon>
        <taxon>Gammaproteobacteria</taxon>
        <taxon>Enterobacterales</taxon>
        <taxon>Enterobacteriaceae</taxon>
        <taxon>Escherichia</taxon>
    </lineage>
</organism>
<keyword id="KW-0903">Direct protein sequencing</keyword>
<keyword id="KW-1015">Disulfide bond</keyword>
<keyword id="KW-0574">Periplasm</keyword>
<keyword id="KW-1185">Reference proteome</keyword>
<keyword id="KW-0732">Signal</keyword>
<keyword id="KW-0346">Stress response</keyword>
<keyword id="KW-0862">Zinc</keyword>
<accession>P0AAA9</accession>
<accession>P32682</accession>
<accession>Q2M8T9</accession>
<accession>Q8X6X2</accession>
<evidence type="ECO:0000269" key="1">
    <source>
    </source>
</evidence>
<evidence type="ECO:0000269" key="2">
    <source>
    </source>
</evidence>
<evidence type="ECO:0000269" key="3">
    <source>
    </source>
</evidence>
<evidence type="ECO:0000269" key="4">
    <source>
    </source>
</evidence>
<evidence type="ECO:0000269" key="5">
    <source>
    </source>
</evidence>
<evidence type="ECO:0000269" key="6">
    <source>
    </source>
</evidence>
<evidence type="ECO:0000269" key="7">
    <source>
    </source>
</evidence>
<evidence type="ECO:0000303" key="8">
    <source>
    </source>
</evidence>
<evidence type="ECO:0000303" key="9">
    <source>
    </source>
</evidence>
<evidence type="ECO:0000305" key="10"/>
<evidence type="ECO:0000305" key="11">
    <source>
    </source>
</evidence>
<sequence>MKRNTKIALVMMALSAMAMGSTSAFAHGGHGMWQQNAAPLTSEQQTAWQKIHNDFYAQSSALQQQLVTKRYEYNALLAANPPDSSKINAVAKEMENLRQSLDELRVKRDIAMAEAGIPRGAGMGMGYGGCGGGGHMGMGHW</sequence>
<feature type="signal peptide" evidence="7">
    <location>
        <begin position="1"/>
        <end position="26"/>
    </location>
</feature>
<feature type="chain" id="PRO_0000022720" description="Signaling pathway modulator ZraP">
    <location>
        <begin position="27"/>
        <end position="141"/>
    </location>
</feature>
<feature type="disulfide bond" description="Interchain" evidence="3">
    <location>
        <position position="130"/>
    </location>
</feature>
<feature type="mutagenesis site" description="Forms homooctomers. Abolishes the binding of copper and strongly decreases the number of zinc ions. Loses repressor activity." evidence="3">
    <location>
        <begin position="27"/>
        <end position="30"/>
    </location>
</feature>
<feature type="mutagenesis site" description="Forms homooctomers. Strongly decreases the number of copper or zinc ions. Loses repressor activity." evidence="3">
    <original>H</original>
    <variation>A</variation>
    <location>
        <position position="27"/>
    </location>
</feature>
<feature type="mutagenesis site" description="Forms homooctomers. Does not change the metal-binding properties." evidence="3">
    <original>H</original>
    <variation>A</variation>
    <location>
        <position position="30"/>
    </location>
</feature>
<feature type="mutagenesis site" description="Destabilizes the octomeric organization. Probably forms monomers. Can still act as a repressor." evidence="3 5">
    <original>C</original>
    <variation>A</variation>
    <location>
        <position position="130"/>
    </location>
</feature>
<feature type="mutagenesis site" description="Destabilizes the octomeric organization. Probably forms monomers." evidence="5">
    <original>C</original>
    <variation>S</variation>
    <location>
        <position position="130"/>
    </location>
</feature>
<feature type="mutagenesis site" description="Forms dimers. Does not change significantly the number of bound metal ions. Does not affect chaperone activity but abolishes repressor activity." evidence="3">
    <location>
        <begin position="135"/>
        <end position="141"/>
    </location>
</feature>
<feature type="mutagenesis site" description="Does not affect the zinc binding affinity or the oligomeric state of the protein." evidence="5">
    <original>H</original>
    <variation>A</variation>
    <location>
        <position position="135"/>
    </location>
</feature>
<proteinExistence type="evidence at protein level"/>
<comment type="function">
    <text evidence="2 3 4 5 6 7">Part of the Zra signaling pathway, an envelope stress response (ESR) system composed of the periplasmic accessory protein ZraP, the histidine kinase ZraS and the transcriptional regulator ZraR (PubMed:26438879, PubMed:30389436, PubMed:33309686). The ZraPSR system contributes to antibiotic resistance and is important for membrane integrity in the presence of membrane-targeting biocides (PubMed:30389436). ZraP acts as a modulator which has both a regulatory and a chaperone function (PubMed:26438879, PubMed:30389436). The zinc-bound form of ZraP modulates the response of the ZraPSR system by inhibiting the expression of the zra genes, probably by interacting with ZraS (PubMed:26438879). Participation to the cell protection arises mainly from this repressor function (PubMed:30389436). Also displays chaperone properties in vitro and protects malate dehydrogenase (MDH) from thermal denaturation at 45 degrees Celsius (PubMed:26438879). Binds zinc, copper, nickel, cobalt but not cadmium or manganese (PubMed:22094925, PubMed:26438879, PubMed:30616070, PubMed:9694902). In vitro, has a higher affinity for copper than for zinc (PubMed:26438879, PubMed:30616070). Is the main zinc containing protein under zinc stress conditions (PubMed:22094925). However, the system has no direct role in zinc or copper resistance (PubMed:26438879, PubMed:30616070).</text>
</comment>
<comment type="activity regulation">
    <text evidence="3">Zinc binding is required for repressor activity and enhances chaperone activity.</text>
</comment>
<comment type="subunit">
    <text evidence="3 5 6">Homooctomer (PubMed:26438879, PubMed:30616070). Organized as a tetramer of dimers (PubMed:26438879). Dimers are formed through a disulfide bridge, which stabilizes the oligomeric state (PubMed:26438879, PubMed:30616070). In vivo, the cysteine residue is at least partially reduced in the periplasm, i.e. it does not form a sulfide bridge with the cysteine residue from another monomer (PubMed:33309686). Disulfide bridges might not be essential for the function of ZraP as a repressor of ZraS (PubMed:33309686).</text>
</comment>
<comment type="subcellular location">
    <subcellularLocation>
        <location evidence="7">Periplasm</location>
    </subcellularLocation>
</comment>
<comment type="induction">
    <text evidence="1 3 7">Expression is stimulated by Zn(2+) in a concentration-dependent manner (PubMed:9694902). Expression is up-regulated in response to high periplasmic concentrations of Zn(2+) or Pb(2+) via the ZraS/ZraR two-component regulatory system (PubMed:11243806, PubMed:26438879). Transcription is also dependent on the RNA polymerase sigma-54 factor (PubMed:11243806).</text>
</comment>
<comment type="domain">
    <text evidence="3 11">The N-terminal region contains the metal-binding site and the C-terminal region is involved in oligomerization (PubMed:26438879). Contains two zinc-binding motifs (Probable). Binds four zinc or copper equivalents per octomer with high affinity and without change in quaternary structure (PubMed:26438879).</text>
</comment>
<comment type="disruption phenotype">
    <text evidence="3 4 5">Deletion of the gene confers increased susceptibility to five classes of antibiotics and to some environmental stresses targeting the envelope (PubMed:30389436). In the absence of stress, the mutants show no default in membrane integrity or in cell morphology as compared to the wild-type cells (PubMed:30389436). In the presence of drugs that target the envelope, the mutants show enhanced membrane disruption and abnormal cell shape (PubMed:30389436). Deletion does not affect the minimum inhibitory concentration (MIC) of E.coli for zinc or copper (PubMed:26438879). In strain TOP10, disruption mutant exhibits a higher tolerance to zinc concentrations above 0.5 mM (PubMed:30616070).</text>
</comment>
<comment type="miscellaneous">
    <text evidence="7">Expression of the P.mirabilis transcriptional regulator PMTR in E.coli results in increased production of ZraP and increased cell resistance to zinc (PubMed:9694902). PMTR has no effect on resistance to nickel, cobalt, copper, manganese or iron (PubMed:9694902).</text>
</comment>
<comment type="similarity">
    <text evidence="10">Belongs to the ZraP family.</text>
</comment>
<comment type="sequence caution" evidence="10">
    <conflict type="erroneous initiation">
        <sequence resource="EMBL-CDS" id="AAC43100"/>
    </conflict>
    <text>Extended N-terminus.</text>
</comment>
<dbReference type="EMBL" id="U00006">
    <property type="protein sequence ID" value="AAC43100.1"/>
    <property type="status" value="ALT_INIT"/>
    <property type="molecule type" value="Genomic_DNA"/>
</dbReference>
<dbReference type="EMBL" id="U00096">
    <property type="protein sequence ID" value="AAC76976.2"/>
    <property type="molecule type" value="Genomic_DNA"/>
</dbReference>
<dbReference type="EMBL" id="AP009048">
    <property type="protein sequence ID" value="BAE77317.1"/>
    <property type="molecule type" value="Genomic_DNA"/>
</dbReference>
<dbReference type="PIR" id="E65207">
    <property type="entry name" value="E65207"/>
</dbReference>
<dbReference type="RefSeq" id="NP_418430.2">
    <property type="nucleotide sequence ID" value="NC_000913.3"/>
</dbReference>
<dbReference type="RefSeq" id="WP_000828222.1">
    <property type="nucleotide sequence ID" value="NZ_STEB01000045.1"/>
</dbReference>
<dbReference type="SMR" id="P0AAA9"/>
<dbReference type="BioGRID" id="4259525">
    <property type="interactions" value="8"/>
</dbReference>
<dbReference type="FunCoup" id="P0AAA9">
    <property type="interactions" value="173"/>
</dbReference>
<dbReference type="STRING" id="511145.b4002"/>
<dbReference type="jPOST" id="P0AAA9"/>
<dbReference type="PaxDb" id="511145-b4002"/>
<dbReference type="EnsemblBacteria" id="AAC76976">
    <property type="protein sequence ID" value="AAC76976"/>
    <property type="gene ID" value="b4002"/>
</dbReference>
<dbReference type="GeneID" id="93777892"/>
<dbReference type="GeneID" id="948507"/>
<dbReference type="KEGG" id="ecj:JW5546"/>
<dbReference type="KEGG" id="eco:b4002"/>
<dbReference type="KEGG" id="ecoc:C3026_21615"/>
<dbReference type="PATRIC" id="fig|1411691.4.peg.2709"/>
<dbReference type="EchoBASE" id="EB1862"/>
<dbReference type="eggNOG" id="COG3678">
    <property type="taxonomic scope" value="Bacteria"/>
</dbReference>
<dbReference type="HOGENOM" id="CLU_124884_0_0_6"/>
<dbReference type="InParanoid" id="P0AAA9"/>
<dbReference type="OMA" id="GMGYGDC"/>
<dbReference type="OrthoDB" id="6572911at2"/>
<dbReference type="PhylomeDB" id="P0AAA9"/>
<dbReference type="BioCyc" id="EcoCyc:EG11918-MONOMER"/>
<dbReference type="PRO" id="PR:P0AAA9"/>
<dbReference type="Proteomes" id="UP000000625">
    <property type="component" value="Chromosome"/>
</dbReference>
<dbReference type="GO" id="GO:0030288">
    <property type="term" value="C:outer membrane-bounded periplasmic space"/>
    <property type="evidence" value="ECO:0000314"/>
    <property type="project" value="EcoCyc"/>
</dbReference>
<dbReference type="GO" id="GO:0050897">
    <property type="term" value="F:cobalt ion binding"/>
    <property type="evidence" value="ECO:0000314"/>
    <property type="project" value="EcoCyc"/>
</dbReference>
<dbReference type="GO" id="GO:0005507">
    <property type="term" value="F:copper ion binding"/>
    <property type="evidence" value="ECO:0000314"/>
    <property type="project" value="EcoCyc"/>
</dbReference>
<dbReference type="GO" id="GO:0042802">
    <property type="term" value="F:identical protein binding"/>
    <property type="evidence" value="ECO:0000314"/>
    <property type="project" value="EcoCyc"/>
</dbReference>
<dbReference type="GO" id="GO:0016151">
    <property type="term" value="F:nickel cation binding"/>
    <property type="evidence" value="ECO:0000314"/>
    <property type="project" value="EcoCyc"/>
</dbReference>
<dbReference type="GO" id="GO:0008270">
    <property type="term" value="F:zinc ion binding"/>
    <property type="evidence" value="ECO:0000314"/>
    <property type="project" value="EcoCyc"/>
</dbReference>
<dbReference type="GO" id="GO:0036460">
    <property type="term" value="P:cellular response to cell envelope stress"/>
    <property type="evidence" value="ECO:0000315"/>
    <property type="project" value="EcoCyc"/>
</dbReference>
<dbReference type="FunFam" id="1.20.120.1490:FF:000003">
    <property type="entry name" value="Zinc resistance-associated protein"/>
    <property type="match status" value="1"/>
</dbReference>
<dbReference type="Gene3D" id="1.20.120.1490">
    <property type="match status" value="1"/>
</dbReference>
<dbReference type="InterPro" id="IPR025961">
    <property type="entry name" value="Metal_resist"/>
</dbReference>
<dbReference type="NCBIfam" id="NF008584">
    <property type="entry name" value="PRK11546.1"/>
    <property type="match status" value="1"/>
</dbReference>
<dbReference type="Pfam" id="PF13801">
    <property type="entry name" value="Metal_resist"/>
    <property type="match status" value="1"/>
</dbReference>
<reference key="1">
    <citation type="journal article" date="1993" name="Nucleic Acids Res.">
        <title>Analysis of the Escherichia coli genome. IV. DNA sequence of the region from 89.2 to 92.8 minutes.</title>
        <authorList>
            <person name="Blattner F.R."/>
            <person name="Burland V.D."/>
            <person name="Plunkett G. III"/>
            <person name="Sofia H.J."/>
            <person name="Daniels D.L."/>
        </authorList>
    </citation>
    <scope>NUCLEOTIDE SEQUENCE [LARGE SCALE GENOMIC DNA]</scope>
    <source>
        <strain>K12 / MG1655 / ATCC 47076</strain>
    </source>
</reference>
<reference key="2">
    <citation type="journal article" date="1997" name="Science">
        <title>The complete genome sequence of Escherichia coli K-12.</title>
        <authorList>
            <person name="Blattner F.R."/>
            <person name="Plunkett G. III"/>
            <person name="Bloch C.A."/>
            <person name="Perna N.T."/>
            <person name="Burland V."/>
            <person name="Riley M."/>
            <person name="Collado-Vides J."/>
            <person name="Glasner J.D."/>
            <person name="Rode C.K."/>
            <person name="Mayhew G.F."/>
            <person name="Gregor J."/>
            <person name="Davis N.W."/>
            <person name="Kirkpatrick H.A."/>
            <person name="Goeden M.A."/>
            <person name="Rose D.J."/>
            <person name="Mau B."/>
            <person name="Shao Y."/>
        </authorList>
    </citation>
    <scope>NUCLEOTIDE SEQUENCE [LARGE SCALE GENOMIC DNA]</scope>
    <source>
        <strain>K12 / MG1655 / ATCC 47076</strain>
    </source>
</reference>
<reference key="3">
    <citation type="journal article" date="2006" name="Mol. Syst. Biol.">
        <title>Highly accurate genome sequences of Escherichia coli K-12 strains MG1655 and W3110.</title>
        <authorList>
            <person name="Hayashi K."/>
            <person name="Morooka N."/>
            <person name="Yamamoto Y."/>
            <person name="Fujita K."/>
            <person name="Isono K."/>
            <person name="Choi S."/>
            <person name="Ohtsubo E."/>
            <person name="Baba T."/>
            <person name="Wanner B.L."/>
            <person name="Mori H."/>
            <person name="Horiuchi T."/>
        </authorList>
    </citation>
    <scope>NUCLEOTIDE SEQUENCE [LARGE SCALE GENOMIC DNA]</scope>
    <source>
        <strain>K12 / W3110 / ATCC 27325 / DSM 5911</strain>
    </source>
</reference>
<reference key="4">
    <citation type="journal article" date="1998" name="J. Biol. Chem.">
        <title>Identification of a novel transcription regulator from Proteus mirabilis, PMTR, revealed a possible role of YJAI protein in balancing zinc in Escherichia coli.</title>
        <authorList>
            <person name="Noll M."/>
            <person name="Petrukhin K."/>
            <person name="Lutsenko S."/>
        </authorList>
    </citation>
    <scope>PROTEIN SEQUENCE OF 27-41</scope>
    <scope>FUNCTION</scope>
    <scope>SUBCELLULAR LOCATION</scope>
    <scope>INDUCTION</scope>
    <scope>DOMAIN</scope>
</reference>
<reference key="5">
    <citation type="journal article" date="2001" name="J. Mol. Biol.">
        <title>The hydH/G genes from Escherichia coli code for a zinc and lead responsive two-component regulatory system.</title>
        <authorList>
            <person name="Leonhartsberger S."/>
            <person name="Huber A."/>
            <person name="Lottspeich F."/>
            <person name="Boeck A."/>
        </authorList>
    </citation>
    <scope>TRANSCRIPTIONAL REGULATION</scope>
    <source>
        <strain>K12 / MC4100 / ATCC 35695 / DSM 6574</strain>
    </source>
</reference>
<reference key="6">
    <citation type="journal article" date="2011" name="Metallomics">
        <title>Exploring the microbial metalloproteome using MIRAGE.</title>
        <authorList>
            <person name="Sevcenco A.M."/>
            <person name="Pinkse M.W."/>
            <person name="Wolterbeek H.T."/>
            <person name="Verhaert P.D."/>
            <person name="Hagen W.R."/>
            <person name="Hagedoorn P.L."/>
        </authorList>
    </citation>
    <scope>FUNCTION</scope>
</reference>
<reference key="7">
    <citation type="journal article" date="2015" name="Biochem. J.">
        <title>Biophysical and physiological characterization of ZraP from Escherichia coli, the periplasmic accessory protein of the atypical ZraSR two-component system.</title>
        <authorList>
            <person name="Petit-Haertlein I."/>
            <person name="Rome K."/>
            <person name="de Rosny E."/>
            <person name="Molton F."/>
            <person name="Duboc C."/>
            <person name="Gueguen E."/>
            <person name="Rodrigue A."/>
            <person name="Coves J."/>
        </authorList>
    </citation>
    <scope>FUNCTION</scope>
    <scope>ACTIVITY REGULATION</scope>
    <scope>SUBUNIT</scope>
    <scope>INDUCTION</scope>
    <scope>DOMAIN</scope>
    <scope>DISRUPTION PHENOTYPE</scope>
    <scope>IDENTIFICATION BY MASS SPECTROMETRY</scope>
    <scope>DISULFIDE BOND</scope>
    <scope>MUTAGENESIS OF 27-HIS--HIS-30; HIS-27; HIS-30; CYS-130 AND 135-HIS--TRP-141</scope>
    <source>
        <strain>K12</strain>
    </source>
</reference>
<reference key="8">
    <citation type="journal article" date="2018" name="J. Mol. Biol.">
        <title>The Two-Component System ZraPSR Is a Novel ESR that Contributes to Intrinsic Antibiotic Tolerance in Escherichia coli.</title>
        <authorList>
            <person name="Rome K."/>
            <person name="Borde C."/>
            <person name="Taher R."/>
            <person name="Cayron J."/>
            <person name="Lesterlin C."/>
            <person name="Gueguen E."/>
            <person name="De Rosny E."/>
            <person name="Rodrigue A."/>
        </authorList>
    </citation>
    <scope>FUNCTION</scope>
    <scope>DISRUPTION PHENOTYPE</scope>
    <source>
        <strain>K12</strain>
    </source>
</reference>
<reference key="9">
    <citation type="journal article" date="2019" name="J. Inorg. Biochem.">
        <title>ZraP, the most prominent zinc protein under zinc stress conditions has no direct role in in-vivo zinc tolerance in Escherichia coli.</title>
        <authorList>
            <person name="van der Weel L."/>
            <person name="As K.S."/>
            <person name="Dekker W.J.C."/>
            <person name="van den Eijnden L."/>
            <person name="van Helmond W."/>
            <person name="Schiphorst C."/>
            <person name="Hagen W.R."/>
            <person name="Hagedoorn P.L."/>
        </authorList>
    </citation>
    <scope>FUNCTION</scope>
    <scope>SUBUNIT</scope>
    <scope>DISRUPTION PHENOTYPE</scope>
    <scope>MUTAGENESIS OF CYS-130 AND HIS-135</scope>
    <source>
        <strain>TOP10</strain>
    </source>
</reference>
<reference key="10">
    <citation type="journal article" date="2021" name="Biochim. Biophys. Acta">
        <title>A structure-function study of ZraP and ZraS provides new insights into the two-component system Zra.</title>
        <authorList>
            <person name="Taher R."/>
            <person name="de Rosny E."/>
        </authorList>
    </citation>
    <scope>FUNCTION</scope>
    <scope>SUBUNIT</scope>
</reference>
<gene>
    <name evidence="9" type="primary">zraP</name>
    <name type="synonym">yjaI</name>
    <name type="synonym">zra</name>
    <name type="ordered locus">b4002</name>
    <name type="ordered locus">JW5546</name>
</gene>
<protein>
    <recommendedName>
        <fullName evidence="10">Signaling pathway modulator ZraP</fullName>
    </recommendedName>
    <alternativeName>
        <fullName evidence="9">Zinc resistance-associated protein</fullName>
    </alternativeName>
    <alternativeName>
        <fullName evidence="8">Zra periplasmic repressor partner</fullName>
    </alternativeName>
    <alternativeName>
        <fullName evidence="10">Zra system accessory protein ZraP</fullName>
    </alternativeName>
</protein>
<name>ZRAP_ECOLI</name>